<feature type="signal peptide" evidence="2">
    <location>
        <begin position="1"/>
        <end position="24"/>
    </location>
</feature>
<feature type="chain" id="PRO_0000411952" description="Pheromone-processing carboxypeptidase KEX1">
    <location>
        <begin position="25"/>
        <end position="635"/>
    </location>
</feature>
<feature type="topological domain" description="Lumenal" evidence="2">
    <location>
        <begin position="25"/>
        <end position="524"/>
    </location>
</feature>
<feature type="transmembrane region" description="Helical" evidence="2">
    <location>
        <begin position="525"/>
        <end position="545"/>
    </location>
</feature>
<feature type="topological domain" description="Cytoplasmic" evidence="2">
    <location>
        <begin position="546"/>
        <end position="635"/>
    </location>
</feature>
<feature type="region of interest" description="Disordered" evidence="3">
    <location>
        <begin position="464"/>
        <end position="512"/>
    </location>
</feature>
<feature type="region of interest" description="Disordered" evidence="3">
    <location>
        <begin position="556"/>
        <end position="635"/>
    </location>
</feature>
<feature type="compositionally biased region" description="Polar residues" evidence="3">
    <location>
        <begin position="482"/>
        <end position="491"/>
    </location>
</feature>
<feature type="compositionally biased region" description="Gly residues" evidence="3">
    <location>
        <begin position="556"/>
        <end position="567"/>
    </location>
</feature>
<feature type="compositionally biased region" description="Basic and acidic residues" evidence="3">
    <location>
        <begin position="573"/>
        <end position="587"/>
    </location>
</feature>
<feature type="compositionally biased region" description="Basic and acidic residues" evidence="3">
    <location>
        <begin position="597"/>
        <end position="612"/>
    </location>
</feature>
<feature type="compositionally biased region" description="Basic and acidic residues" evidence="3">
    <location>
        <begin position="624"/>
        <end position="635"/>
    </location>
</feature>
<feature type="active site" evidence="1">
    <location>
        <position position="176"/>
    </location>
</feature>
<feature type="active site" evidence="1">
    <location>
        <position position="376"/>
    </location>
</feature>
<feature type="active site" evidence="1">
    <location>
        <position position="438"/>
    </location>
</feature>
<feature type="glycosylation site" description="N-linked (GlcNAc...) asparagine" evidence="2">
    <location>
        <position position="112"/>
    </location>
</feature>
<feature type="glycosylation site" description="N-linked (GlcNAc...) asparagine" evidence="2">
    <location>
        <position position="427"/>
    </location>
</feature>
<protein>
    <recommendedName>
        <fullName>Pheromone-processing carboxypeptidase KEX1</fullName>
        <ecNumber>3.4.16.6</ecNumber>
    </recommendedName>
    <alternativeName>
        <fullName>Carboxypeptidase D</fullName>
    </alternativeName>
</protein>
<proteinExistence type="inferred from homology"/>
<sequence length="635" mass="71005">MAPAIRQLATGLLLALSWAPTTRADSSAADYYVKSLPGQPAGPPVKMHAGHIETDADHNGNLFFWHFENKHIAQRQRTVIWLNGGPGCSSEDGAMMEIGPYRVKGDQLVNNNGSWHEFANLLFVDNPVGTGFSYVDTNSYLHELDEMGDQFILFLEKFFKLFPQYAQDDLYFAGESYAGQHIPYIAKHILERNEKAGPDDQWNLKGLVIGNGWISPFEQYGSYLKFAYEKGLLAQGSEKAKQLEQQWKICRKQMAVDIKIDISECEAILQKILDVTATLTTSGKRNCYNMYDVRLKDTYPSCGMNWPPDLTDVTPYLRRKDVTEALHINAAKNTGWKECNGAVGSAFRAHKSKPSRDLLPDLLKKVPITLFSGAEDLICNHIGTEEMIGNMEWNGAKGFEVSPGNWAPRRDWTFEGKDAGFWQEARNLTYVLFKEASHMVPFDWPRRSRDMIDRVMKVDISAIGGEPTDSRIDGEKGPVTSVPPSKGSNNHPDTKPGGGDKGSSTNDDETQKQVDEAKWKAYYRSGEIVLVIVVIAAGLWGWYIWRDRRRRSGYQGVAGGDGAGPGHRAGARGLDRFQDRRTARDVETGDFDESELDDLHVETPREGPHKEAYAIGDDSDEEDIKGKGPERSGTR</sequence>
<reference key="1">
    <citation type="journal article" date="2011" name="PLoS Pathog.">
        <title>Comparative genomics yields insights into niche adaptation of plant vascular wilt pathogens.</title>
        <authorList>
            <person name="Klosterman S.J."/>
            <person name="Subbarao K.V."/>
            <person name="Kang S."/>
            <person name="Veronese P."/>
            <person name="Gold S.E."/>
            <person name="Thomma B.P.H.J."/>
            <person name="Chen Z."/>
            <person name="Henrissat B."/>
            <person name="Lee Y.-H."/>
            <person name="Park J."/>
            <person name="Garcia-Pedrajas M.D."/>
            <person name="Barbara D.J."/>
            <person name="Anchieta A."/>
            <person name="de Jonge R."/>
            <person name="Santhanam P."/>
            <person name="Maruthachalam K."/>
            <person name="Atallah Z."/>
            <person name="Amyotte S.G."/>
            <person name="Paz Z."/>
            <person name="Inderbitzin P."/>
            <person name="Hayes R.J."/>
            <person name="Heiman D.I."/>
            <person name="Young S."/>
            <person name="Zeng Q."/>
            <person name="Engels R."/>
            <person name="Galagan J."/>
            <person name="Cuomo C.A."/>
            <person name="Dobinson K.F."/>
            <person name="Ma L.-J."/>
        </authorList>
    </citation>
    <scope>NUCLEOTIDE SEQUENCE [LARGE SCALE GENOMIC DNA]</scope>
    <source>
        <strain>VaMs.102 / ATCC MYA-4576 / FGSC 10136</strain>
    </source>
</reference>
<evidence type="ECO:0000250" key="1"/>
<evidence type="ECO:0000255" key="2"/>
<evidence type="ECO:0000256" key="3">
    <source>
        <dbReference type="SAM" id="MobiDB-lite"/>
    </source>
</evidence>
<evidence type="ECO:0000305" key="4"/>
<dbReference type="EC" id="3.4.16.6"/>
<dbReference type="EMBL" id="DS985214">
    <property type="protein sequence ID" value="EEY14400.1"/>
    <property type="molecule type" value="Genomic_DNA"/>
</dbReference>
<dbReference type="RefSeq" id="XP_003008826.1">
    <property type="nucleotide sequence ID" value="XM_003008780.1"/>
</dbReference>
<dbReference type="SMR" id="C9S688"/>
<dbReference type="STRING" id="526221.C9S688"/>
<dbReference type="ESTHER" id="vera1-kex1">
    <property type="family name" value="Carboxypeptidase_S10"/>
</dbReference>
<dbReference type="MEROPS" id="S10.007"/>
<dbReference type="GlyCosmos" id="C9S688">
    <property type="glycosylation" value="2 sites, No reported glycans"/>
</dbReference>
<dbReference type="GeneID" id="9529181"/>
<dbReference type="KEGG" id="val:VDBG_00507"/>
<dbReference type="eggNOG" id="KOG1282">
    <property type="taxonomic scope" value="Eukaryota"/>
</dbReference>
<dbReference type="HOGENOM" id="CLU_008523_11_0_1"/>
<dbReference type="OMA" id="EMADQFV"/>
<dbReference type="OrthoDB" id="443318at2759"/>
<dbReference type="Proteomes" id="UP000008698">
    <property type="component" value="Unassembled WGS sequence"/>
</dbReference>
<dbReference type="GO" id="GO:0016020">
    <property type="term" value="C:membrane"/>
    <property type="evidence" value="ECO:0007669"/>
    <property type="project" value="UniProtKB-KW"/>
</dbReference>
<dbReference type="GO" id="GO:0005802">
    <property type="term" value="C:trans-Golgi network"/>
    <property type="evidence" value="ECO:0007669"/>
    <property type="project" value="TreeGrafter"/>
</dbReference>
<dbReference type="GO" id="GO:0004185">
    <property type="term" value="F:serine-type carboxypeptidase activity"/>
    <property type="evidence" value="ECO:0007669"/>
    <property type="project" value="UniProtKB-EC"/>
</dbReference>
<dbReference type="GO" id="GO:0006915">
    <property type="term" value="P:apoptotic process"/>
    <property type="evidence" value="ECO:0007669"/>
    <property type="project" value="UniProtKB-KW"/>
</dbReference>
<dbReference type="GO" id="GO:0006508">
    <property type="term" value="P:proteolysis"/>
    <property type="evidence" value="ECO:0007669"/>
    <property type="project" value="UniProtKB-KW"/>
</dbReference>
<dbReference type="FunFam" id="3.40.50.1820:FF:000121">
    <property type="entry name" value="Carboxypeptidase D"/>
    <property type="match status" value="1"/>
</dbReference>
<dbReference type="Gene3D" id="3.40.50.1820">
    <property type="entry name" value="alpha/beta hydrolase"/>
    <property type="match status" value="1"/>
</dbReference>
<dbReference type="InterPro" id="IPR029058">
    <property type="entry name" value="AB_hydrolase_fold"/>
</dbReference>
<dbReference type="InterPro" id="IPR001563">
    <property type="entry name" value="Peptidase_S10"/>
</dbReference>
<dbReference type="PANTHER" id="PTHR11802:SF190">
    <property type="entry name" value="PHEROMONE-PROCESSING CARBOXYPEPTIDASE KEX1"/>
    <property type="match status" value="1"/>
</dbReference>
<dbReference type="PANTHER" id="PTHR11802">
    <property type="entry name" value="SERINE PROTEASE FAMILY S10 SERINE CARBOXYPEPTIDASE"/>
    <property type="match status" value="1"/>
</dbReference>
<dbReference type="Pfam" id="PF00450">
    <property type="entry name" value="Peptidase_S10"/>
    <property type="match status" value="1"/>
</dbReference>
<dbReference type="PRINTS" id="PR00724">
    <property type="entry name" value="CRBOXYPTASEC"/>
</dbReference>
<dbReference type="SUPFAM" id="SSF53474">
    <property type="entry name" value="alpha/beta-Hydrolases"/>
    <property type="match status" value="1"/>
</dbReference>
<accession>C9S688</accession>
<name>KEX1_VERA1</name>
<comment type="function">
    <text evidence="1">Protease with a carboxypeptidase B-like function involved in the C-terminal processing of the lysine and arginine residues from protein precursors. Promotes cell fusion and is involved in the programmed cell death (By similarity).</text>
</comment>
<comment type="catalytic activity">
    <reaction>
        <text>Preferential release of a C-terminal arginine or lysine residue.</text>
        <dbReference type="EC" id="3.4.16.6"/>
    </reaction>
</comment>
<comment type="subcellular location">
    <subcellularLocation>
        <location evidence="1">Golgi apparatus</location>
        <location evidence="1">trans-Golgi network membrane</location>
        <topology evidence="1">Single-pass type I membrane protein</topology>
    </subcellularLocation>
</comment>
<comment type="similarity">
    <text evidence="4">Belongs to the peptidase S10 family.</text>
</comment>
<keyword id="KW-0053">Apoptosis</keyword>
<keyword id="KW-0121">Carboxypeptidase</keyword>
<keyword id="KW-0325">Glycoprotein</keyword>
<keyword id="KW-0333">Golgi apparatus</keyword>
<keyword id="KW-0378">Hydrolase</keyword>
<keyword id="KW-0472">Membrane</keyword>
<keyword id="KW-0645">Protease</keyword>
<keyword id="KW-1185">Reference proteome</keyword>
<keyword id="KW-0732">Signal</keyword>
<keyword id="KW-0812">Transmembrane</keyword>
<keyword id="KW-1133">Transmembrane helix</keyword>
<organism>
    <name type="scientific">Verticillium alfalfae (strain VaMs.102 / ATCC MYA-4576 / FGSC 10136)</name>
    <name type="common">Verticillium wilt of alfalfa</name>
    <name type="synonym">Verticillium albo-atrum</name>
    <dbReference type="NCBI Taxonomy" id="526221"/>
    <lineage>
        <taxon>Eukaryota</taxon>
        <taxon>Fungi</taxon>
        <taxon>Dikarya</taxon>
        <taxon>Ascomycota</taxon>
        <taxon>Pezizomycotina</taxon>
        <taxon>Sordariomycetes</taxon>
        <taxon>Hypocreomycetidae</taxon>
        <taxon>Glomerellales</taxon>
        <taxon>Plectosphaerellaceae</taxon>
        <taxon>Verticillium</taxon>
    </lineage>
</organism>
<gene>
    <name type="primary">KEX1</name>
    <name type="ORF">VDBG_00507</name>
</gene>